<feature type="chain" id="PRO_0000184059" description="Endoglucanase 2">
    <location>
        <begin position="1" status="less than"/>
        <end position="130"/>
    </location>
</feature>
<feature type="active site" evidence="1">
    <location>
        <position position="47"/>
    </location>
</feature>
<feature type="active site" evidence="2">
    <location>
        <position position="98"/>
    </location>
</feature>
<feature type="active site" evidence="2">
    <location>
        <position position="107"/>
    </location>
</feature>
<feature type="non-terminal residue">
    <location>
        <position position="1"/>
    </location>
</feature>
<dbReference type="EC" id="3.2.1.4"/>
<dbReference type="EMBL" id="X55790">
    <property type="protein sequence ID" value="CAA39314.1"/>
    <property type="molecule type" value="Genomic_DNA"/>
</dbReference>
<dbReference type="PIR" id="S34493">
    <property type="entry name" value="S34493"/>
</dbReference>
<dbReference type="SMR" id="P23666"/>
<dbReference type="CAZy" id="GH9">
    <property type="family name" value="Glycoside Hydrolase Family 9"/>
</dbReference>
<dbReference type="GO" id="GO:0008810">
    <property type="term" value="F:cellulase activity"/>
    <property type="evidence" value="ECO:0007669"/>
    <property type="project" value="UniProtKB-EC"/>
</dbReference>
<dbReference type="GO" id="GO:0030245">
    <property type="term" value="P:cellulose catabolic process"/>
    <property type="evidence" value="ECO:0007669"/>
    <property type="project" value="UniProtKB-KW"/>
</dbReference>
<dbReference type="GO" id="GO:0009835">
    <property type="term" value="P:fruit ripening"/>
    <property type="evidence" value="ECO:0007669"/>
    <property type="project" value="UniProtKB-KW"/>
</dbReference>
<dbReference type="Gene3D" id="1.50.10.10">
    <property type="match status" value="1"/>
</dbReference>
<dbReference type="InterPro" id="IPR008928">
    <property type="entry name" value="6-hairpin_glycosidase_sf"/>
</dbReference>
<dbReference type="InterPro" id="IPR012341">
    <property type="entry name" value="6hp_glycosidase-like_sf"/>
</dbReference>
<dbReference type="InterPro" id="IPR001701">
    <property type="entry name" value="Glyco_hydro_9"/>
</dbReference>
<dbReference type="InterPro" id="IPR033126">
    <property type="entry name" value="Glyco_hydro_9_Asp/Glu_AS"/>
</dbReference>
<dbReference type="InterPro" id="IPR018221">
    <property type="entry name" value="Glyco_hydro_9_His_AS"/>
</dbReference>
<dbReference type="PANTHER" id="PTHR22298">
    <property type="entry name" value="ENDO-1,4-BETA-GLUCANASE"/>
    <property type="match status" value="1"/>
</dbReference>
<dbReference type="Pfam" id="PF00759">
    <property type="entry name" value="Glyco_hydro_9"/>
    <property type="match status" value="1"/>
</dbReference>
<dbReference type="SUPFAM" id="SSF48208">
    <property type="entry name" value="Six-hairpin glycosidases"/>
    <property type="match status" value="1"/>
</dbReference>
<dbReference type="PROSITE" id="PS00592">
    <property type="entry name" value="GH9_2"/>
    <property type="match status" value="1"/>
</dbReference>
<dbReference type="PROSITE" id="PS00698">
    <property type="entry name" value="GH9_3"/>
    <property type="match status" value="1"/>
</dbReference>
<protein>
    <recommendedName>
        <fullName>Endoglucanase 2</fullName>
        <ecNumber>3.2.1.4</ecNumber>
    </recommendedName>
    <alternativeName>
        <fullName>Abscission cellulase 2</fullName>
    </alternativeName>
    <alternativeName>
        <fullName>Endo-1,4-beta-glucanase 2</fullName>
    </alternativeName>
</protein>
<gene>
    <name type="primary">CEL2</name>
</gene>
<sequence length="130" mass="13892">ASCGSTTVTAKNLISLAKKQVDYILGENPAKMSYMVGFGERYPQHVHHRGSSLPSVHAHPNPIPCNAGFQYLYSSSPNPNILVGAILGGPDSRDSFSDDRNNYQQSEPATYINAPLVGALAFFAANPVAN</sequence>
<keyword id="KW-0119">Carbohydrate metabolism</keyword>
<keyword id="KW-0136">Cellulose degradation</keyword>
<keyword id="KW-0292">Fruit ripening</keyword>
<keyword id="KW-0326">Glycosidase</keyword>
<keyword id="KW-0378">Hydrolase</keyword>
<keyword id="KW-0624">Polysaccharide degradation</keyword>
<reference key="1">
    <citation type="journal article" date="1990" name="Mol. Gen. Genet.">
        <title>Isolation and characterization of a cellulase gene family member expressed during avocado fruit ripening.</title>
        <authorList>
            <person name="Cass L.G."/>
            <person name="Kirven K.A."/>
            <person name="Christoffersen R.E."/>
        </authorList>
    </citation>
    <scope>NUCLEOTIDE SEQUENCE [GENOMIC DNA]</scope>
    <source>
        <strain>cv. Hass</strain>
        <tissue>Fruit</tissue>
    </source>
</reference>
<organism>
    <name type="scientific">Persea americana</name>
    <name type="common">Avocado</name>
    <dbReference type="NCBI Taxonomy" id="3435"/>
    <lineage>
        <taxon>Eukaryota</taxon>
        <taxon>Viridiplantae</taxon>
        <taxon>Streptophyta</taxon>
        <taxon>Embryophyta</taxon>
        <taxon>Tracheophyta</taxon>
        <taxon>Spermatophyta</taxon>
        <taxon>Magnoliopsida</taxon>
        <taxon>Magnoliidae</taxon>
        <taxon>Laurales</taxon>
        <taxon>Lauraceae</taxon>
        <taxon>Persea</taxon>
    </lineage>
</organism>
<accession>P23666</accession>
<evidence type="ECO:0000255" key="1">
    <source>
        <dbReference type="PROSITE-ProRule" id="PRU10059"/>
    </source>
</evidence>
<evidence type="ECO:0000255" key="2">
    <source>
        <dbReference type="PROSITE-ProRule" id="PRU10060"/>
    </source>
</evidence>
<evidence type="ECO:0000305" key="3"/>
<proteinExistence type="evidence at transcript level"/>
<comment type="function">
    <text>Involved in ripening fruit process.</text>
</comment>
<comment type="catalytic activity">
    <reaction>
        <text>Endohydrolysis of (1-&gt;4)-beta-D-glucosidic linkages in cellulose, lichenin and cereal beta-D-glucans.</text>
        <dbReference type="EC" id="3.2.1.4"/>
    </reaction>
</comment>
<comment type="developmental stage">
    <text>In ripening fruit.</text>
</comment>
<comment type="similarity">
    <text evidence="3">Belongs to the glycosyl hydrolase 9 (cellulase E) family.</text>
</comment>
<name>GUN2_PERAE</name>